<name>TRM56_CENSY</name>
<proteinExistence type="inferred from homology"/>
<gene>
    <name type="ordered locus">CENSYa_1737</name>
</gene>
<reference key="1">
    <citation type="journal article" date="2006" name="Proc. Natl. Acad. Sci. U.S.A.">
        <title>Genomic analysis of the uncultivated marine crenarchaeote Cenarchaeum symbiosum.</title>
        <authorList>
            <person name="Hallam S.J."/>
            <person name="Konstantinidis K.T."/>
            <person name="Putnam N."/>
            <person name="Schleper C."/>
            <person name="Watanabe Y."/>
            <person name="Sugahara J."/>
            <person name="Preston C."/>
            <person name="de la Torre J."/>
            <person name="Richardson P.M."/>
            <person name="DeLong E.F."/>
        </authorList>
    </citation>
    <scope>NUCLEOTIDE SEQUENCE [LARGE SCALE GENOMIC DNA]</scope>
    <source>
        <strain>A</strain>
    </source>
</reference>
<comment type="function">
    <text evidence="1">Specifically catalyzes the AdoMet-dependent 2'-O-ribose methylation of cytidine at position 56 in tRNAs.</text>
</comment>
<comment type="catalytic activity">
    <reaction evidence="1">
        <text>cytidine(56) in tRNA + S-adenosyl-L-methionine = 2'-O-methylcytidine(56) in tRNA + S-adenosyl-L-homocysteine + H(+)</text>
        <dbReference type="Rhea" id="RHEA:42968"/>
        <dbReference type="Rhea" id="RHEA-COMP:10308"/>
        <dbReference type="Rhea" id="RHEA-COMP:10309"/>
        <dbReference type="ChEBI" id="CHEBI:15378"/>
        <dbReference type="ChEBI" id="CHEBI:57856"/>
        <dbReference type="ChEBI" id="CHEBI:59789"/>
        <dbReference type="ChEBI" id="CHEBI:74495"/>
        <dbReference type="ChEBI" id="CHEBI:82748"/>
        <dbReference type="EC" id="2.1.1.206"/>
    </reaction>
</comment>
<comment type="subunit">
    <text evidence="1">Homodimer.</text>
</comment>
<comment type="subcellular location">
    <subcellularLocation>
        <location evidence="1">Cytoplasm</location>
    </subcellularLocation>
</comment>
<comment type="similarity">
    <text evidence="1">Belongs to the aTrm56 family.</text>
</comment>
<evidence type="ECO:0000255" key="1">
    <source>
        <dbReference type="HAMAP-Rule" id="MF_00077"/>
    </source>
</evidence>
<sequence>MRIEVLRIGQRAVRDDRVTTHAALVARAFGAERIFMEEVNPQVRDTLADVSSTWGGGFEVELIDSWRALLRSKKGSASIVHLTMYGETIDAAIGSLRRKEKILAVVGAGKVPRDVYELADYNVSIGGQPHSEISALAVFLDRLQEGRQLSKGYGDARRKVLPMRRGKHVLEGEPE</sequence>
<accession>A0RYD1</accession>
<protein>
    <recommendedName>
        <fullName evidence="1">tRNA (cytidine(56)-2'-O)-methyltransferase</fullName>
        <ecNumber evidence="1">2.1.1.206</ecNumber>
    </recommendedName>
    <alternativeName>
        <fullName evidence="1">tRNA ribose 2'-O-methyltransferase aTrm56</fullName>
    </alternativeName>
</protein>
<organism>
    <name type="scientific">Cenarchaeum symbiosum (strain A)</name>
    <dbReference type="NCBI Taxonomy" id="414004"/>
    <lineage>
        <taxon>Archaea</taxon>
        <taxon>Nitrososphaerota</taxon>
        <taxon>Candidatus Cenarchaeales</taxon>
        <taxon>Candidatus Cenarchaeaceae</taxon>
        <taxon>Candidatus Cenarchaeum</taxon>
    </lineage>
</organism>
<dbReference type="EC" id="2.1.1.206" evidence="1"/>
<dbReference type="EMBL" id="DP000238">
    <property type="protein sequence ID" value="ABK78348.1"/>
    <property type="molecule type" value="Genomic_DNA"/>
</dbReference>
<dbReference type="SMR" id="A0RYD1"/>
<dbReference type="STRING" id="414004.CENSYa_1737"/>
<dbReference type="EnsemblBacteria" id="ABK78348">
    <property type="protein sequence ID" value="ABK78348"/>
    <property type="gene ID" value="CENSYa_1737"/>
</dbReference>
<dbReference type="KEGG" id="csy:CENSYa_1737"/>
<dbReference type="PATRIC" id="fig|414004.10.peg.1584"/>
<dbReference type="HOGENOM" id="CLU_123709_0_0_2"/>
<dbReference type="Proteomes" id="UP000000758">
    <property type="component" value="Chromosome"/>
</dbReference>
<dbReference type="GO" id="GO:0005737">
    <property type="term" value="C:cytoplasm"/>
    <property type="evidence" value="ECO:0007669"/>
    <property type="project" value="UniProtKB-SubCell"/>
</dbReference>
<dbReference type="GO" id="GO:0106059">
    <property type="term" value="F:tRNA (cytidine(56)-2'-O)-methyltransferase activity"/>
    <property type="evidence" value="ECO:0007669"/>
    <property type="project" value="UniProtKB-EC"/>
</dbReference>
<dbReference type="GO" id="GO:0002128">
    <property type="term" value="P:tRNA nucleoside ribose methylation"/>
    <property type="evidence" value="ECO:0007669"/>
    <property type="project" value="UniProtKB-UniRule"/>
</dbReference>
<dbReference type="CDD" id="cd18083">
    <property type="entry name" value="aTrm56-like"/>
    <property type="match status" value="1"/>
</dbReference>
<dbReference type="Gene3D" id="3.40.1280.10">
    <property type="match status" value="1"/>
</dbReference>
<dbReference type="HAMAP" id="MF_00077">
    <property type="entry name" value="tRNA_methyltr_aTrm56"/>
    <property type="match status" value="1"/>
</dbReference>
<dbReference type="InterPro" id="IPR029028">
    <property type="entry name" value="Alpha/beta_knot_MTases"/>
</dbReference>
<dbReference type="InterPro" id="IPR029026">
    <property type="entry name" value="tRNA_m1G_MTases_N"/>
</dbReference>
<dbReference type="InterPro" id="IPR002845">
    <property type="entry name" value="tRNA_mtfrase_aTrm56"/>
</dbReference>
<dbReference type="PANTHER" id="PTHR42197">
    <property type="entry name" value="TRNA (CYTIDINE(56)-2'-O)-METHYLTRANSFERASE"/>
    <property type="match status" value="1"/>
</dbReference>
<dbReference type="PANTHER" id="PTHR42197:SF1">
    <property type="entry name" value="TRNA (CYTIDINE(56)-2'-O)-METHYLTRANSFERASE"/>
    <property type="match status" value="1"/>
</dbReference>
<dbReference type="Pfam" id="PF01994">
    <property type="entry name" value="Trm56"/>
    <property type="match status" value="1"/>
</dbReference>
<dbReference type="PIRSF" id="PIRSF016123">
    <property type="entry name" value="UCP016123"/>
    <property type="match status" value="1"/>
</dbReference>
<dbReference type="SUPFAM" id="SSF75217">
    <property type="entry name" value="alpha/beta knot"/>
    <property type="match status" value="1"/>
</dbReference>
<keyword id="KW-0963">Cytoplasm</keyword>
<keyword id="KW-0489">Methyltransferase</keyword>
<keyword id="KW-1185">Reference proteome</keyword>
<keyword id="KW-0949">S-adenosyl-L-methionine</keyword>
<keyword id="KW-0808">Transferase</keyword>
<keyword id="KW-0819">tRNA processing</keyword>
<feature type="chain" id="PRO_0000365297" description="tRNA (cytidine(56)-2'-O)-methyltransferase">
    <location>
        <begin position="1"/>
        <end position="175"/>
    </location>
</feature>
<feature type="binding site" evidence="1">
    <location>
        <position position="82"/>
    </location>
    <ligand>
        <name>S-adenosyl-L-methionine</name>
        <dbReference type="ChEBI" id="CHEBI:59789"/>
    </ligand>
</feature>